<gene>
    <name evidence="1" type="primary">PB1</name>
</gene>
<comment type="function">
    <text evidence="1">RNA-dependent RNA polymerase which is responsible for replication and transcription of virus RNA segments. The transcription of viral mRNAs occurs by a unique mechanism called cap-snatching. 5' methylated caps of cellular mRNAs are cleaved after 10-13 nucleotides by PA. In turn, these short capped RNAs are used as primers by PB1 for transcription of viral mRNAs. During virus replication, PB1 initiates RNA synthesis and copy vRNA into complementary RNA (cRNA) which in turn serves as a template for the production of more vRNAs.</text>
</comment>
<comment type="catalytic activity">
    <reaction evidence="1">
        <text>RNA(n) + a ribonucleoside 5'-triphosphate = RNA(n+1) + diphosphate</text>
        <dbReference type="Rhea" id="RHEA:21248"/>
        <dbReference type="Rhea" id="RHEA-COMP:14527"/>
        <dbReference type="Rhea" id="RHEA-COMP:17342"/>
        <dbReference type="ChEBI" id="CHEBI:33019"/>
        <dbReference type="ChEBI" id="CHEBI:61557"/>
        <dbReference type="ChEBI" id="CHEBI:140395"/>
        <dbReference type="EC" id="2.7.7.48"/>
    </reaction>
</comment>
<comment type="subunit">
    <text evidence="1">Influenza RNA polymerase is composed of three subunits: PB1, PB2 and PA. Interacts (via N-terminus) with PA (via C-terminus). Interacts (via C-terminus) with PB2 (via N-terminus); this interaction is essential for transcription initiation.</text>
</comment>
<comment type="subcellular location">
    <subcellularLocation>
        <location evidence="1">Host nucleus</location>
    </subcellularLocation>
    <subcellularLocation>
        <location evidence="1">Host cytoplasm</location>
    </subcellularLocation>
</comment>
<comment type="PTM">
    <text evidence="1">Phosphorylated by host PRKCA.</text>
</comment>
<comment type="similarity">
    <text evidence="1">Belongs to the influenza viruses polymerase PB1 family.</text>
</comment>
<keyword id="KW-1262">Eukaryotic host gene expression shutoff by virus</keyword>
<keyword id="KW-1191">Eukaryotic host transcription shutoff by virus</keyword>
<keyword id="KW-1035">Host cytoplasm</keyword>
<keyword id="KW-1190">Host gene expression shutoff by virus</keyword>
<keyword id="KW-1048">Host nucleus</keyword>
<keyword id="KW-0945">Host-virus interaction</keyword>
<keyword id="KW-1104">Inhibition of host RNA polymerase II by virus</keyword>
<keyword id="KW-0547">Nucleotide-binding</keyword>
<keyword id="KW-0548">Nucleotidyltransferase</keyword>
<keyword id="KW-0597">Phosphoprotein</keyword>
<keyword id="KW-0696">RNA-directed RNA polymerase</keyword>
<keyword id="KW-0808">Transferase</keyword>
<keyword id="KW-0693">Viral RNA replication</keyword>
<keyword id="KW-1195">Viral transcription</keyword>
<dbReference type="EC" id="2.7.7.48" evidence="1"/>
<dbReference type="EMBL" id="M25927">
    <property type="protein sequence ID" value="AAA43636.1"/>
    <property type="molecule type" value="Genomic_RNA"/>
</dbReference>
<dbReference type="SMR" id="P16509"/>
<dbReference type="GO" id="GO:0030430">
    <property type="term" value="C:host cell cytoplasm"/>
    <property type="evidence" value="ECO:0007669"/>
    <property type="project" value="UniProtKB-SubCell"/>
</dbReference>
<dbReference type="GO" id="GO:0042025">
    <property type="term" value="C:host cell nucleus"/>
    <property type="evidence" value="ECO:0007669"/>
    <property type="project" value="UniProtKB-SubCell"/>
</dbReference>
<dbReference type="GO" id="GO:0000166">
    <property type="term" value="F:nucleotide binding"/>
    <property type="evidence" value="ECO:0007669"/>
    <property type="project" value="UniProtKB-UniRule"/>
</dbReference>
<dbReference type="GO" id="GO:0003723">
    <property type="term" value="F:RNA binding"/>
    <property type="evidence" value="ECO:0007669"/>
    <property type="project" value="InterPro"/>
</dbReference>
<dbReference type="GO" id="GO:0003968">
    <property type="term" value="F:RNA-directed RNA polymerase activity"/>
    <property type="evidence" value="ECO:0007669"/>
    <property type="project" value="UniProtKB-UniRule"/>
</dbReference>
<dbReference type="GO" id="GO:0006351">
    <property type="term" value="P:DNA-templated transcription"/>
    <property type="evidence" value="ECO:0007669"/>
    <property type="project" value="UniProtKB-UniRule"/>
</dbReference>
<dbReference type="GO" id="GO:0039657">
    <property type="term" value="P:symbiont-mediated suppression of host gene expression"/>
    <property type="evidence" value="ECO:0007669"/>
    <property type="project" value="UniProtKB-KW"/>
</dbReference>
<dbReference type="GO" id="GO:0039523">
    <property type="term" value="P:symbiont-mediated suppression of host mRNA transcription via inhibition of RNA polymerase II activity"/>
    <property type="evidence" value="ECO:0007669"/>
    <property type="project" value="UniProtKB-UniRule"/>
</dbReference>
<dbReference type="GO" id="GO:0039694">
    <property type="term" value="P:viral RNA genome replication"/>
    <property type="evidence" value="ECO:0007669"/>
    <property type="project" value="UniProtKB-UniRule"/>
</dbReference>
<dbReference type="GO" id="GO:0019083">
    <property type="term" value="P:viral transcription"/>
    <property type="evidence" value="ECO:0007669"/>
    <property type="project" value="UniProtKB-KW"/>
</dbReference>
<dbReference type="Gene3D" id="6.10.140.720">
    <property type="match status" value="1"/>
</dbReference>
<dbReference type="HAMAP" id="MF_04065">
    <property type="entry name" value="INFV_RDRP"/>
    <property type="match status" value="1"/>
</dbReference>
<dbReference type="InterPro" id="IPR007099">
    <property type="entry name" value="RNA-dir_pol_NSvirus"/>
</dbReference>
<dbReference type="InterPro" id="IPR001407">
    <property type="entry name" value="RNA_pol_PB1_influenza"/>
</dbReference>
<dbReference type="Pfam" id="PF00602">
    <property type="entry name" value="Flu_PB1"/>
    <property type="match status" value="1"/>
</dbReference>
<dbReference type="PIRSF" id="PIRSF000827">
    <property type="entry name" value="RdRPol_OMV"/>
    <property type="match status" value="1"/>
</dbReference>
<dbReference type="PROSITE" id="PS50525">
    <property type="entry name" value="RDRP_SSRNA_NEG_SEG"/>
    <property type="match status" value="1"/>
</dbReference>
<organismHost>
    <name type="scientific">Aves</name>
    <dbReference type="NCBI Taxonomy" id="8782"/>
</organismHost>
<organismHost>
    <name type="scientific">Cetacea</name>
    <name type="common">whales</name>
    <dbReference type="NCBI Taxonomy" id="9721"/>
</organismHost>
<organismHost>
    <name type="scientific">Homo sapiens</name>
    <name type="common">Human</name>
    <dbReference type="NCBI Taxonomy" id="9606"/>
</organismHost>
<organismHost>
    <name type="scientific">Phocidae</name>
    <name type="common">true seals</name>
    <dbReference type="NCBI Taxonomy" id="9709"/>
</organismHost>
<organismHost>
    <name type="scientific">Sus scrofa</name>
    <name type="common">Pig</name>
    <dbReference type="NCBI Taxonomy" id="9823"/>
</organismHost>
<protein>
    <recommendedName>
        <fullName evidence="1">RNA-directed RNA polymerase catalytic subunit</fullName>
        <ecNumber evidence="1">2.7.7.48</ecNumber>
    </recommendedName>
    <alternativeName>
        <fullName evidence="1">Polymerase basic protein 1</fullName>
        <shortName evidence="1">PB1</shortName>
    </alternativeName>
    <alternativeName>
        <fullName evidence="1">RNA-directed RNA polymerase subunit P1</fullName>
    </alternativeName>
</protein>
<proteinExistence type="inferred from homology"/>
<name>RDRP_I82A4</name>
<feature type="chain" id="PRO_0000078769" description="RNA-directed RNA polymerase catalytic subunit">
    <location>
        <begin position="1"/>
        <end position="757"/>
    </location>
</feature>
<feature type="domain" description="RdRp catalytic" evidence="1">
    <location>
        <begin position="286"/>
        <end position="483"/>
    </location>
</feature>
<feature type="region of interest" description="Disordered" evidence="2">
    <location>
        <begin position="50"/>
        <end position="82"/>
    </location>
</feature>
<feature type="region of interest" description="Promoter-binding site" evidence="1">
    <location>
        <begin position="249"/>
        <end position="256"/>
    </location>
</feature>
<feature type="short sequence motif" description="Nuclear localization signal" evidence="1">
    <location>
        <begin position="187"/>
        <end position="195"/>
    </location>
</feature>
<feature type="short sequence motif" description="Nuclear localization signal" evidence="1">
    <location>
        <begin position="203"/>
        <end position="216"/>
    </location>
</feature>
<feature type="compositionally biased region" description="Polar residues" evidence="2">
    <location>
        <begin position="55"/>
        <end position="64"/>
    </location>
</feature>
<evidence type="ECO:0000255" key="1">
    <source>
        <dbReference type="HAMAP-Rule" id="MF_04065"/>
    </source>
</evidence>
<evidence type="ECO:0000256" key="2">
    <source>
        <dbReference type="SAM" id="MobiDB-lite"/>
    </source>
</evidence>
<reference key="1">
    <citation type="journal article" date="1989" name="J. Virol.">
        <title>Avian-to-human transmission of the PB1 gene of influenza A viruses in the 1957 and 1968 pandemics.</title>
        <authorList>
            <person name="Kawaoka Y."/>
            <person name="Krauss S."/>
            <person name="Webster R.G."/>
        </authorList>
    </citation>
    <scope>NUCLEOTIDE SEQUENCE [GENOMIC RNA]</scope>
</reference>
<organism>
    <name type="scientific">Influenza A virus (strain A/Swine/Hong Kong/126/1982 H3N2)</name>
    <dbReference type="NCBI Taxonomy" id="382848"/>
    <lineage>
        <taxon>Viruses</taxon>
        <taxon>Riboviria</taxon>
        <taxon>Orthornavirae</taxon>
        <taxon>Negarnaviricota</taxon>
        <taxon>Polyploviricotina</taxon>
        <taxon>Insthoviricetes</taxon>
        <taxon>Articulavirales</taxon>
        <taxon>Orthomyxoviridae</taxon>
        <taxon>Alphainfluenzavirus</taxon>
        <taxon>Alphainfluenzavirus influenzae</taxon>
        <taxon>Influenza A virus</taxon>
    </lineage>
</organism>
<sequence>MDVNPTLLFLKVPAQNAISTTFPYTGDPPYSHGTGTGYTMDTVNRTHQYSEKGKWTTNTETGAPQLNPIDGPLPEDNEPSGYAQTDCVLEAMAFLEESHPGIFENSCLETMEVVQQTRVDKLTQGRQTYDWTLNRNQPAATALANTIEVFRSNGLTANESGRLIDFLKDVMESMDKEGMEITTHFQRKRRVRDNMTKKMVTQRTIGKKKQRLNKRSYLIRALTLNTMTKDAERGKLKRRAIATPGMQIRGFVYFVETLARSICEKLEQSGLPVGGNEKKAKLANVVRKMMTNSQDTELSFTITGDNTKWNENQNPRMFLAMITYITRNQPEWFRNVLSIAPIMFSNKMARLGKGYMFESKSMKLRTQIPAEMLANIDLKYFNESTRKRIEKIRPLLIDGTASLSPGMMMGMFNMLSTVLGVSILNLGQKRYTRTTYWWDGLQSSDDFALIVNAPNHEGIQAGVDRFYRTCKLVGINMSKKKSYINRTGTFEFTSFFYRYGFVANFSMELPSFGVSGINESADMSIGVTVIKNNMINNDLGPATAQMALQLFIKDYRYTYRCHRGDTQIQTRRSFELKKLWEQTRSKAGLLVSDGGPNLYNIRNLHIPEVCLKWELMDEDYQGRLCNPLNPFVSHKEIESVNNAVVMPAHGPAKSMEYDAVATTHSWIPKRNRSILNTSQRGILEDEQMYQKCCNLFEKFFPSSSYRRPVGISSMVEAMVSRARIDARIDFESGRIKKEEFAEIMKICSTIEEFRRQK</sequence>
<accession>P16509</accession>